<dbReference type="EC" id="3.4.21.88" evidence="1"/>
<dbReference type="EMBL" id="CP001348">
    <property type="protein sequence ID" value="ACL76044.1"/>
    <property type="molecule type" value="Genomic_DNA"/>
</dbReference>
<dbReference type="RefSeq" id="WP_015925159.1">
    <property type="nucleotide sequence ID" value="NC_011898.1"/>
</dbReference>
<dbReference type="SMR" id="B8I2Q1"/>
<dbReference type="STRING" id="394503.Ccel_1693"/>
<dbReference type="MEROPS" id="S24.001"/>
<dbReference type="KEGG" id="cce:Ccel_1693"/>
<dbReference type="eggNOG" id="COG1974">
    <property type="taxonomic scope" value="Bacteria"/>
</dbReference>
<dbReference type="HOGENOM" id="CLU_066192_45_1_9"/>
<dbReference type="OrthoDB" id="9802364at2"/>
<dbReference type="Proteomes" id="UP000001349">
    <property type="component" value="Chromosome"/>
</dbReference>
<dbReference type="GO" id="GO:0003677">
    <property type="term" value="F:DNA binding"/>
    <property type="evidence" value="ECO:0007669"/>
    <property type="project" value="UniProtKB-UniRule"/>
</dbReference>
<dbReference type="GO" id="GO:0004252">
    <property type="term" value="F:serine-type endopeptidase activity"/>
    <property type="evidence" value="ECO:0007669"/>
    <property type="project" value="UniProtKB-UniRule"/>
</dbReference>
<dbReference type="GO" id="GO:0006281">
    <property type="term" value="P:DNA repair"/>
    <property type="evidence" value="ECO:0007669"/>
    <property type="project" value="UniProtKB-UniRule"/>
</dbReference>
<dbReference type="GO" id="GO:0006260">
    <property type="term" value="P:DNA replication"/>
    <property type="evidence" value="ECO:0007669"/>
    <property type="project" value="UniProtKB-UniRule"/>
</dbReference>
<dbReference type="GO" id="GO:0045892">
    <property type="term" value="P:negative regulation of DNA-templated transcription"/>
    <property type="evidence" value="ECO:0007669"/>
    <property type="project" value="UniProtKB-UniRule"/>
</dbReference>
<dbReference type="GO" id="GO:0006508">
    <property type="term" value="P:proteolysis"/>
    <property type="evidence" value="ECO:0007669"/>
    <property type="project" value="InterPro"/>
</dbReference>
<dbReference type="GO" id="GO:0009432">
    <property type="term" value="P:SOS response"/>
    <property type="evidence" value="ECO:0007669"/>
    <property type="project" value="UniProtKB-UniRule"/>
</dbReference>
<dbReference type="CDD" id="cd06529">
    <property type="entry name" value="S24_LexA-like"/>
    <property type="match status" value="1"/>
</dbReference>
<dbReference type="FunFam" id="2.10.109.10:FF:000001">
    <property type="entry name" value="LexA repressor"/>
    <property type="match status" value="1"/>
</dbReference>
<dbReference type="Gene3D" id="2.10.109.10">
    <property type="entry name" value="Umud Fragment, subunit A"/>
    <property type="match status" value="1"/>
</dbReference>
<dbReference type="Gene3D" id="1.10.10.10">
    <property type="entry name" value="Winged helix-like DNA-binding domain superfamily/Winged helix DNA-binding domain"/>
    <property type="match status" value="1"/>
</dbReference>
<dbReference type="HAMAP" id="MF_00015">
    <property type="entry name" value="LexA"/>
    <property type="match status" value="1"/>
</dbReference>
<dbReference type="InterPro" id="IPR006200">
    <property type="entry name" value="LexA"/>
</dbReference>
<dbReference type="InterPro" id="IPR039418">
    <property type="entry name" value="LexA-like"/>
</dbReference>
<dbReference type="InterPro" id="IPR036286">
    <property type="entry name" value="LexA/Signal_pep-like_sf"/>
</dbReference>
<dbReference type="InterPro" id="IPR006199">
    <property type="entry name" value="LexA_DNA-bd_dom"/>
</dbReference>
<dbReference type="InterPro" id="IPR050077">
    <property type="entry name" value="LexA_repressor"/>
</dbReference>
<dbReference type="InterPro" id="IPR006197">
    <property type="entry name" value="Peptidase_S24_LexA"/>
</dbReference>
<dbReference type="InterPro" id="IPR015927">
    <property type="entry name" value="Peptidase_S24_S26A/B/C"/>
</dbReference>
<dbReference type="InterPro" id="IPR036388">
    <property type="entry name" value="WH-like_DNA-bd_sf"/>
</dbReference>
<dbReference type="InterPro" id="IPR036390">
    <property type="entry name" value="WH_DNA-bd_sf"/>
</dbReference>
<dbReference type="NCBIfam" id="TIGR00498">
    <property type="entry name" value="lexA"/>
    <property type="match status" value="1"/>
</dbReference>
<dbReference type="PANTHER" id="PTHR33516">
    <property type="entry name" value="LEXA REPRESSOR"/>
    <property type="match status" value="1"/>
</dbReference>
<dbReference type="PANTHER" id="PTHR33516:SF2">
    <property type="entry name" value="LEXA REPRESSOR-RELATED"/>
    <property type="match status" value="1"/>
</dbReference>
<dbReference type="Pfam" id="PF01726">
    <property type="entry name" value="LexA_DNA_bind"/>
    <property type="match status" value="1"/>
</dbReference>
<dbReference type="Pfam" id="PF00717">
    <property type="entry name" value="Peptidase_S24"/>
    <property type="match status" value="1"/>
</dbReference>
<dbReference type="PRINTS" id="PR00726">
    <property type="entry name" value="LEXASERPTASE"/>
</dbReference>
<dbReference type="SUPFAM" id="SSF51306">
    <property type="entry name" value="LexA/Signal peptidase"/>
    <property type="match status" value="1"/>
</dbReference>
<dbReference type="SUPFAM" id="SSF46785">
    <property type="entry name" value="Winged helix' DNA-binding domain"/>
    <property type="match status" value="1"/>
</dbReference>
<name>LEXA_RUMCH</name>
<organism>
    <name type="scientific">Ruminiclostridium cellulolyticum (strain ATCC 35319 / DSM 5812 / JCM 6584 / H10)</name>
    <name type="common">Clostridium cellulolyticum</name>
    <dbReference type="NCBI Taxonomy" id="394503"/>
    <lineage>
        <taxon>Bacteria</taxon>
        <taxon>Bacillati</taxon>
        <taxon>Bacillota</taxon>
        <taxon>Clostridia</taxon>
        <taxon>Eubacteriales</taxon>
        <taxon>Oscillospiraceae</taxon>
        <taxon>Ruminiclostridium</taxon>
    </lineage>
</organism>
<feature type="chain" id="PRO_1000116600" description="LexA repressor">
    <location>
        <begin position="1"/>
        <end position="215"/>
    </location>
</feature>
<feature type="DNA-binding region" description="H-T-H motif" evidence="1">
    <location>
        <begin position="29"/>
        <end position="49"/>
    </location>
</feature>
<feature type="active site" description="For autocatalytic cleavage activity" evidence="1">
    <location>
        <position position="138"/>
    </location>
</feature>
<feature type="active site" description="For autocatalytic cleavage activity" evidence="1">
    <location>
        <position position="175"/>
    </location>
</feature>
<feature type="site" description="Cleavage; by autolysis" evidence="1">
    <location>
        <begin position="103"/>
        <end position="104"/>
    </location>
</feature>
<accession>B8I2Q1</accession>
<protein>
    <recommendedName>
        <fullName evidence="1">LexA repressor</fullName>
        <ecNumber evidence="1">3.4.21.88</ecNumber>
    </recommendedName>
</protein>
<evidence type="ECO:0000255" key="1">
    <source>
        <dbReference type="HAMAP-Rule" id="MF_00015"/>
    </source>
</evidence>
<keyword id="KW-0068">Autocatalytic cleavage</keyword>
<keyword id="KW-0227">DNA damage</keyword>
<keyword id="KW-0234">DNA repair</keyword>
<keyword id="KW-0235">DNA replication</keyword>
<keyword id="KW-0238">DNA-binding</keyword>
<keyword id="KW-0378">Hydrolase</keyword>
<keyword id="KW-1185">Reference proteome</keyword>
<keyword id="KW-0678">Repressor</keyword>
<keyword id="KW-0742">SOS response</keyword>
<keyword id="KW-0804">Transcription</keyword>
<keyword id="KW-0805">Transcription regulation</keyword>
<reference key="1">
    <citation type="submission" date="2009-01" db="EMBL/GenBank/DDBJ databases">
        <title>Complete sequence of Clostridium cellulolyticum H10.</title>
        <authorList>
            <consortium name="US DOE Joint Genome Institute"/>
            <person name="Lucas S."/>
            <person name="Copeland A."/>
            <person name="Lapidus A."/>
            <person name="Glavina del Rio T."/>
            <person name="Dalin E."/>
            <person name="Tice H."/>
            <person name="Bruce D."/>
            <person name="Goodwin L."/>
            <person name="Pitluck S."/>
            <person name="Chertkov O."/>
            <person name="Saunders E."/>
            <person name="Brettin T."/>
            <person name="Detter J.C."/>
            <person name="Han C."/>
            <person name="Larimer F."/>
            <person name="Land M."/>
            <person name="Hauser L."/>
            <person name="Kyrpides N."/>
            <person name="Ivanova N."/>
            <person name="Zhou J."/>
            <person name="Richardson P."/>
        </authorList>
    </citation>
    <scope>NUCLEOTIDE SEQUENCE [LARGE SCALE GENOMIC DNA]</scope>
    <source>
        <strain>ATCC 35319 / DSM 5812 / JCM 6584 / H10</strain>
    </source>
</reference>
<sequence>MAKKNSNKQQEILDYVYKCVHENGYPPSVREICSAVGFKSTSTVHSYLQKLIDKGHLQKDPTKPRAIKILNKTSQVQENRTNKEGYYTSREMVDVPVVGRVTAGQPILAVENITDTFPLPVDFVQNSDAFMLRIQGESMIDAGILDKDFVLVRQQSSANNGDIVVALIGDEATCKTFYREKDHIRLQPQNSSMEPIVVKDELSILGKVIGVFRRM</sequence>
<proteinExistence type="inferred from homology"/>
<gene>
    <name evidence="1" type="primary">lexA</name>
    <name type="ordered locus">Ccel_1693</name>
</gene>
<comment type="function">
    <text evidence="1">Represses a number of genes involved in the response to DNA damage (SOS response), including recA and lexA. In the presence of single-stranded DNA, RecA interacts with LexA causing an autocatalytic cleavage which disrupts the DNA-binding part of LexA, leading to derepression of the SOS regulon and eventually DNA repair.</text>
</comment>
<comment type="catalytic activity">
    <reaction evidence="1">
        <text>Hydrolysis of Ala-|-Gly bond in repressor LexA.</text>
        <dbReference type="EC" id="3.4.21.88"/>
    </reaction>
</comment>
<comment type="subunit">
    <text evidence="1">Homodimer.</text>
</comment>
<comment type="similarity">
    <text evidence="1">Belongs to the peptidase S24 family.</text>
</comment>